<comment type="function">
    <text evidence="1">Chromatin reader component of the NuA4 histone acetyltransferase complex, a multiprotein complex involved in transcriptional activation of select genes principally by acetylation of nucleosomal histones H4 and H2A. The NuA4 complex plays a direct role in repair of DNA double-strand breaks (DSBs) by promoting homologous recombination (HR). MBTD1 specifically recognizes and binds monomethylated and dimethylated 'Lys-20' on histone H4 (H4K20me1 and H4K20me2, respectively). In the NuA4 complex, MBTD1 promotes recruitment of the complex to H4K20me marks by competing with TP53BP1 for binding to H4K20me. Following recruitment to H4K20me at DNA breaks, the NuA4 complex catalyzes acetylation of 'Lys-15' on histone H2A (H2AK15), blocking the ubiquitination mark required for TP53BP1 localization at DNA breaks, thereby promoting homologous recombination (HR).</text>
</comment>
<comment type="subunit">
    <text evidence="1">Monomer. Component of the NuA4 histone acetyltransferase complex.</text>
</comment>
<comment type="subcellular location">
    <subcellularLocation>
        <location evidence="1">Nucleus</location>
    </subcellularLocation>
    <subcellularLocation>
        <location evidence="1">Chromosome</location>
    </subcellularLocation>
</comment>
<dbReference type="EMBL" id="CR760838">
    <property type="protein sequence ID" value="CAJ83167.1"/>
    <property type="molecule type" value="mRNA"/>
</dbReference>
<dbReference type="EMBL" id="BC075504">
    <property type="protein sequence ID" value="AAH75504.1"/>
    <property type="molecule type" value="mRNA"/>
</dbReference>
<dbReference type="RefSeq" id="NP_001006742.1">
    <property type="nucleotide sequence ID" value="NM_001006741.1"/>
</dbReference>
<dbReference type="SMR" id="Q6DIN3"/>
<dbReference type="FunCoup" id="Q6DIN3">
    <property type="interactions" value="2035"/>
</dbReference>
<dbReference type="STRING" id="8364.ENSXETP00000029236"/>
<dbReference type="PaxDb" id="8364-ENSXETP00000002764"/>
<dbReference type="DNASU" id="448411"/>
<dbReference type="GeneID" id="448411"/>
<dbReference type="KEGG" id="xtr:448411"/>
<dbReference type="AGR" id="Xenbase:XB-GENE-949653"/>
<dbReference type="CTD" id="54799"/>
<dbReference type="Xenbase" id="XB-GENE-949653">
    <property type="gene designation" value="mbtd1"/>
</dbReference>
<dbReference type="eggNOG" id="KOG3766">
    <property type="taxonomic scope" value="Eukaryota"/>
</dbReference>
<dbReference type="HOGENOM" id="CLU_005352_2_1_1"/>
<dbReference type="InParanoid" id="Q6DIN3"/>
<dbReference type="OMA" id="CAENGMP"/>
<dbReference type="OrthoDB" id="5800688at2759"/>
<dbReference type="PhylomeDB" id="Q6DIN3"/>
<dbReference type="TreeFam" id="TF316498"/>
<dbReference type="Proteomes" id="UP000008143">
    <property type="component" value="Chromosome 10"/>
</dbReference>
<dbReference type="Bgee" id="ENSXETG00000001291">
    <property type="expression patterns" value="Expressed in gastrula and 19 other cell types or tissues"/>
</dbReference>
<dbReference type="ExpressionAtlas" id="Q6DIN3">
    <property type="expression patterns" value="baseline"/>
</dbReference>
<dbReference type="GO" id="GO:0035267">
    <property type="term" value="C:NuA4 histone acetyltransferase complex"/>
    <property type="evidence" value="ECO:0000250"/>
    <property type="project" value="UniProtKB"/>
</dbReference>
<dbReference type="GO" id="GO:0005634">
    <property type="term" value="C:nucleus"/>
    <property type="evidence" value="ECO:0007669"/>
    <property type="project" value="UniProtKB-SubCell"/>
</dbReference>
<dbReference type="GO" id="GO:0140005">
    <property type="term" value="F:histone H4K20me2 reader activity"/>
    <property type="evidence" value="ECO:0000250"/>
    <property type="project" value="UniProtKB"/>
</dbReference>
<dbReference type="GO" id="GO:0008270">
    <property type="term" value="F:zinc ion binding"/>
    <property type="evidence" value="ECO:0007669"/>
    <property type="project" value="UniProtKB-KW"/>
</dbReference>
<dbReference type="GO" id="GO:0000724">
    <property type="term" value="P:double-strand break repair via homologous recombination"/>
    <property type="evidence" value="ECO:0000250"/>
    <property type="project" value="UniProtKB"/>
</dbReference>
<dbReference type="GO" id="GO:0006355">
    <property type="term" value="P:regulation of DNA-templated transcription"/>
    <property type="evidence" value="ECO:0007669"/>
    <property type="project" value="InterPro"/>
</dbReference>
<dbReference type="CDD" id="cd20120">
    <property type="entry name" value="MBT_MBTD1_rpt1"/>
    <property type="match status" value="1"/>
</dbReference>
<dbReference type="CDD" id="cd20123">
    <property type="entry name" value="MBT_MBTD1_rpt2"/>
    <property type="match status" value="1"/>
</dbReference>
<dbReference type="CDD" id="cd20126">
    <property type="entry name" value="MBT_MBTD1_rpt3"/>
    <property type="match status" value="1"/>
</dbReference>
<dbReference type="CDD" id="cd20129">
    <property type="entry name" value="MBT_MBTD1_rpt4"/>
    <property type="match status" value="1"/>
</dbReference>
<dbReference type="FunFam" id="2.30.30.140:FF:000010">
    <property type="entry name" value="MBT domain-containing protein 1 isoform X1"/>
    <property type="match status" value="1"/>
</dbReference>
<dbReference type="FunFam" id="2.30.30.140:FF:000015">
    <property type="entry name" value="MBT domain-containing protein 1 isoform X1"/>
    <property type="match status" value="1"/>
</dbReference>
<dbReference type="FunFam" id="2.30.30.140:FF:000019">
    <property type="entry name" value="MBT domain-containing protein 1 isoform X1"/>
    <property type="match status" value="1"/>
</dbReference>
<dbReference type="FunFam" id="2.30.30.140:FF:000032">
    <property type="entry name" value="MBT domain-containing protein 1 isoform X1"/>
    <property type="match status" value="1"/>
</dbReference>
<dbReference type="FunFam" id="3.30.60.160:FF:000001">
    <property type="entry name" value="MBT domain-containing protein 1 isoform X1"/>
    <property type="match status" value="1"/>
</dbReference>
<dbReference type="Gene3D" id="2.30.30.140">
    <property type="match status" value="4"/>
</dbReference>
<dbReference type="Gene3D" id="3.30.60.160">
    <property type="match status" value="1"/>
</dbReference>
<dbReference type="InterPro" id="IPR004092">
    <property type="entry name" value="Mbt"/>
</dbReference>
<dbReference type="InterPro" id="IPR050548">
    <property type="entry name" value="PcG_chromatin_remod_factors"/>
</dbReference>
<dbReference type="InterPro" id="IPR012313">
    <property type="entry name" value="Znf_FCS"/>
</dbReference>
<dbReference type="InterPro" id="IPR038603">
    <property type="entry name" value="Znf_FCS_sf"/>
</dbReference>
<dbReference type="PANTHER" id="PTHR12247:SF79">
    <property type="entry name" value="MBT DOMAIN-CONTAINING PROTEIN 1"/>
    <property type="match status" value="1"/>
</dbReference>
<dbReference type="PANTHER" id="PTHR12247">
    <property type="entry name" value="POLYCOMB GROUP PROTEIN"/>
    <property type="match status" value="1"/>
</dbReference>
<dbReference type="Pfam" id="PF02820">
    <property type="entry name" value="MBT"/>
    <property type="match status" value="4"/>
</dbReference>
<dbReference type="Pfam" id="PF21319">
    <property type="entry name" value="zf-FCS_1"/>
    <property type="match status" value="1"/>
</dbReference>
<dbReference type="SMART" id="SM00561">
    <property type="entry name" value="MBT"/>
    <property type="match status" value="4"/>
</dbReference>
<dbReference type="SUPFAM" id="SSF63748">
    <property type="entry name" value="Tudor/PWWP/MBT"/>
    <property type="match status" value="4"/>
</dbReference>
<dbReference type="PROSITE" id="PS51079">
    <property type="entry name" value="MBT"/>
    <property type="match status" value="4"/>
</dbReference>
<dbReference type="PROSITE" id="PS51024">
    <property type="entry name" value="ZF_FCS"/>
    <property type="match status" value="1"/>
</dbReference>
<name>MBTD1_XENTR</name>
<sequence length="651" mass="72910">MEKTKDLADLSSLSERKRRDSFGMFDGYDSCSEDTSSSSSSDESEEEVAPLPSSLPIIKNNGQVYTYPDGKSGMATCEMCGMVGVRDAFYSKTKRFCSVSCSRSYSSNSKKASILARLQGKPPTKKAKVLQKKPLVAKLAAYAQYKATLKNQSVNKAPVTVEGFSWGNYITSNNTAAAPVTCFRHAPMGNCWGDIAEGVRVEVPNTDSNLPTKVFWISGIVKLAGFNALLRYEGFENDSSLDFWCNICGPDVHPVGWCATSGKPLVPPQTIQHKYTNWKAFLVKRLTGAKTLPPDFSQKVSESMQYPFKPSMRVEVVDKTHLCRTRVAVVDSVIGGRLRLVYEESEDKTDDFWCHMYSPLIHPIGWSRSIGHRFKRTDILKKQESNYDAPSHLFTKVKDIEQGSEWFKEGMKLEAIDPLNLSAICVATIRKVLADGYLMIGIDGSEAADGSDWFCYHASSPSIFPVGFCEINKIELTPPRGYTKLPFKWFDYLRETGSIAAPVKLFNKEVPNHGFRVGMKLEAVDLMEPRLVCVATVTRIIHRLLRIHFDGWEDEYDQWVDCESSDLYPVGWCQLTGYQLQPPAPQSNKDSQSNISKQKKKSKSQPYKGHKKITALQLKDEMLDGDDYTFLQGASDQESNGSGSYYIKQEP</sequence>
<gene>
    <name evidence="1" type="primary">mbtd1</name>
    <name evidence="4" type="ORF">TTpA012c17.1</name>
</gene>
<feature type="chain" id="PRO_0000313720" description="MBT domain-containing protein 1">
    <location>
        <begin position="1"/>
        <end position="651"/>
    </location>
</feature>
<feature type="repeat" description="MBT 1">
    <location>
        <begin position="164"/>
        <end position="268"/>
    </location>
</feature>
<feature type="repeat" description="MBT 2">
    <location>
        <begin position="276"/>
        <end position="373"/>
    </location>
</feature>
<feature type="repeat" description="MBT 3">
    <location>
        <begin position="374"/>
        <end position="479"/>
    </location>
</feature>
<feature type="repeat" description="MBT 4">
    <location>
        <begin position="487"/>
        <end position="583"/>
    </location>
</feature>
<feature type="zinc finger region" description="FCS-type" evidence="2">
    <location>
        <begin position="68"/>
        <end position="103"/>
    </location>
</feature>
<feature type="region of interest" description="Disordered" evidence="3">
    <location>
        <begin position="21"/>
        <end position="55"/>
    </location>
</feature>
<feature type="region of interest" description="Disordered" evidence="3">
    <location>
        <begin position="581"/>
        <end position="610"/>
    </location>
</feature>
<feature type="region of interest" description="Disordered" evidence="3">
    <location>
        <begin position="629"/>
        <end position="651"/>
    </location>
</feature>
<feature type="compositionally biased region" description="Low complexity" evidence="3">
    <location>
        <begin position="29"/>
        <end position="41"/>
    </location>
</feature>
<feature type="compositionally biased region" description="Low complexity" evidence="3">
    <location>
        <begin position="586"/>
        <end position="596"/>
    </location>
</feature>
<feature type="compositionally biased region" description="Basic residues" evidence="3">
    <location>
        <begin position="597"/>
        <end position="610"/>
    </location>
</feature>
<feature type="compositionally biased region" description="Polar residues" evidence="3">
    <location>
        <begin position="632"/>
        <end position="643"/>
    </location>
</feature>
<feature type="binding site" evidence="2">
    <location>
        <position position="77"/>
    </location>
    <ligand>
        <name>Zn(2+)</name>
        <dbReference type="ChEBI" id="CHEBI:29105"/>
    </ligand>
</feature>
<feature type="binding site" evidence="2">
    <location>
        <position position="80"/>
    </location>
    <ligand>
        <name>Zn(2+)</name>
        <dbReference type="ChEBI" id="CHEBI:29105"/>
    </ligand>
</feature>
<feature type="binding site" evidence="2">
    <location>
        <position position="97"/>
    </location>
    <ligand>
        <name>Zn(2+)</name>
        <dbReference type="ChEBI" id="CHEBI:29105"/>
    </ligand>
</feature>
<feature type="binding site" evidence="2">
    <location>
        <position position="101"/>
    </location>
    <ligand>
        <name>Zn(2+)</name>
        <dbReference type="ChEBI" id="CHEBI:29105"/>
    </ligand>
</feature>
<proteinExistence type="evidence at transcript level"/>
<reference key="1">
    <citation type="submission" date="2006-10" db="EMBL/GenBank/DDBJ databases">
        <authorList>
            <consortium name="Sanger Xenopus tropicalis EST/cDNA project"/>
        </authorList>
    </citation>
    <scope>NUCLEOTIDE SEQUENCE [LARGE SCALE MRNA]</scope>
    <source>
        <tissue>Tadpole</tissue>
    </source>
</reference>
<reference key="2">
    <citation type="submission" date="2004-06" db="EMBL/GenBank/DDBJ databases">
        <authorList>
            <consortium name="NIH - Xenopus Gene Collection (XGC) project"/>
        </authorList>
    </citation>
    <scope>NUCLEOTIDE SEQUENCE [LARGE SCALE MRNA]</scope>
    <source>
        <tissue>Embryo</tissue>
    </source>
</reference>
<accession>Q6DIN3</accession>
<protein>
    <recommendedName>
        <fullName evidence="5">MBT domain-containing protein 1</fullName>
    </recommendedName>
</protein>
<evidence type="ECO:0000250" key="1">
    <source>
        <dbReference type="UniProtKB" id="Q05BQ5"/>
    </source>
</evidence>
<evidence type="ECO:0000255" key="2">
    <source>
        <dbReference type="PROSITE-ProRule" id="PRU00367"/>
    </source>
</evidence>
<evidence type="ECO:0000256" key="3">
    <source>
        <dbReference type="SAM" id="MobiDB-lite"/>
    </source>
</evidence>
<evidence type="ECO:0000303" key="4">
    <source ref="1"/>
</evidence>
<evidence type="ECO:0000305" key="5"/>
<organism>
    <name type="scientific">Xenopus tropicalis</name>
    <name type="common">Western clawed frog</name>
    <name type="synonym">Silurana tropicalis</name>
    <dbReference type="NCBI Taxonomy" id="8364"/>
    <lineage>
        <taxon>Eukaryota</taxon>
        <taxon>Metazoa</taxon>
        <taxon>Chordata</taxon>
        <taxon>Craniata</taxon>
        <taxon>Vertebrata</taxon>
        <taxon>Euteleostomi</taxon>
        <taxon>Amphibia</taxon>
        <taxon>Batrachia</taxon>
        <taxon>Anura</taxon>
        <taxon>Pipoidea</taxon>
        <taxon>Pipidae</taxon>
        <taxon>Xenopodinae</taxon>
        <taxon>Xenopus</taxon>
        <taxon>Silurana</taxon>
    </lineage>
</organism>
<keyword id="KW-0156">Chromatin regulator</keyword>
<keyword id="KW-0158">Chromosome</keyword>
<keyword id="KW-0479">Metal-binding</keyword>
<keyword id="KW-0539">Nucleus</keyword>
<keyword id="KW-1185">Reference proteome</keyword>
<keyword id="KW-0677">Repeat</keyword>
<keyword id="KW-0804">Transcription</keyword>
<keyword id="KW-0805">Transcription regulation</keyword>
<keyword id="KW-0862">Zinc</keyword>
<keyword id="KW-0863">Zinc-finger</keyword>